<organism>
    <name type="scientific">Rickettsia prowazekii (strain Madrid E)</name>
    <dbReference type="NCBI Taxonomy" id="272947"/>
    <lineage>
        <taxon>Bacteria</taxon>
        <taxon>Pseudomonadati</taxon>
        <taxon>Pseudomonadota</taxon>
        <taxon>Alphaproteobacteria</taxon>
        <taxon>Rickettsiales</taxon>
        <taxon>Rickettsiaceae</taxon>
        <taxon>Rickettsieae</taxon>
        <taxon>Rickettsia</taxon>
        <taxon>typhus group</taxon>
    </lineage>
</organism>
<name>RL28_RICPR</name>
<proteinExistence type="inferred from homology"/>
<reference key="1">
    <citation type="journal article" date="1998" name="Nature">
        <title>The genome sequence of Rickettsia prowazekii and the origin of mitochondria.</title>
        <authorList>
            <person name="Andersson S.G.E."/>
            <person name="Zomorodipour A."/>
            <person name="Andersson J.O."/>
            <person name="Sicheritz-Ponten T."/>
            <person name="Alsmark U.C.M."/>
            <person name="Podowski R.M."/>
            <person name="Naeslund A.K."/>
            <person name="Eriksson A.-S."/>
            <person name="Winkler H.H."/>
            <person name="Kurland C.G."/>
        </authorList>
    </citation>
    <scope>NUCLEOTIDE SEQUENCE [LARGE SCALE GENOMIC DNA]</scope>
    <source>
        <strain>Madrid E</strain>
    </source>
</reference>
<accession>Q9ZE48</accession>
<gene>
    <name evidence="1" type="primary">rpmB</name>
    <name type="ordered locus">RP099</name>
</gene>
<protein>
    <recommendedName>
        <fullName evidence="1">Large ribosomal subunit protein bL28</fullName>
    </recommendedName>
    <alternativeName>
        <fullName evidence="2">50S ribosomal protein L28</fullName>
    </alternativeName>
</protein>
<sequence length="97" mass="10953">MSRKCELTGVGVLYGNNVSHSQRKTRRRFEPNLRSIKFRSDITDEVYRLSVNARCIRSVEKAGGFDAYILKANDDILSSAARAIKQKIIHIKAAKSL</sequence>
<dbReference type="EMBL" id="AJ235270">
    <property type="protein sequence ID" value="CAA14569.1"/>
    <property type="molecule type" value="Genomic_DNA"/>
</dbReference>
<dbReference type="PIR" id="B71719">
    <property type="entry name" value="B71719"/>
</dbReference>
<dbReference type="RefSeq" id="NP_220492.1">
    <property type="nucleotide sequence ID" value="NC_000963.1"/>
</dbReference>
<dbReference type="RefSeq" id="WP_004596475.1">
    <property type="nucleotide sequence ID" value="NC_000963.1"/>
</dbReference>
<dbReference type="SMR" id="Q9ZE48"/>
<dbReference type="STRING" id="272947.gene:17555182"/>
<dbReference type="EnsemblBacteria" id="CAA14569">
    <property type="protein sequence ID" value="CAA14569"/>
    <property type="gene ID" value="CAA14569"/>
</dbReference>
<dbReference type="GeneID" id="57569226"/>
<dbReference type="KEGG" id="rpr:RP099"/>
<dbReference type="PATRIC" id="fig|272947.5.peg.99"/>
<dbReference type="eggNOG" id="COG0227">
    <property type="taxonomic scope" value="Bacteria"/>
</dbReference>
<dbReference type="HOGENOM" id="CLU_064548_4_2_5"/>
<dbReference type="OrthoDB" id="9805609at2"/>
<dbReference type="Proteomes" id="UP000002480">
    <property type="component" value="Chromosome"/>
</dbReference>
<dbReference type="GO" id="GO:1990904">
    <property type="term" value="C:ribonucleoprotein complex"/>
    <property type="evidence" value="ECO:0007669"/>
    <property type="project" value="UniProtKB-KW"/>
</dbReference>
<dbReference type="GO" id="GO:0005840">
    <property type="term" value="C:ribosome"/>
    <property type="evidence" value="ECO:0007669"/>
    <property type="project" value="UniProtKB-KW"/>
</dbReference>
<dbReference type="GO" id="GO:0003735">
    <property type="term" value="F:structural constituent of ribosome"/>
    <property type="evidence" value="ECO:0007669"/>
    <property type="project" value="InterPro"/>
</dbReference>
<dbReference type="GO" id="GO:0006412">
    <property type="term" value="P:translation"/>
    <property type="evidence" value="ECO:0007669"/>
    <property type="project" value="UniProtKB-UniRule"/>
</dbReference>
<dbReference type="Gene3D" id="2.30.170.40">
    <property type="entry name" value="Ribosomal protein L28/L24"/>
    <property type="match status" value="1"/>
</dbReference>
<dbReference type="HAMAP" id="MF_00373">
    <property type="entry name" value="Ribosomal_bL28"/>
    <property type="match status" value="1"/>
</dbReference>
<dbReference type="InterPro" id="IPR026569">
    <property type="entry name" value="Ribosomal_bL28"/>
</dbReference>
<dbReference type="InterPro" id="IPR034704">
    <property type="entry name" value="Ribosomal_bL28/bL31-like_sf"/>
</dbReference>
<dbReference type="InterPro" id="IPR001383">
    <property type="entry name" value="Ribosomal_bL28_bact-type"/>
</dbReference>
<dbReference type="InterPro" id="IPR037147">
    <property type="entry name" value="Ribosomal_bL28_sf"/>
</dbReference>
<dbReference type="NCBIfam" id="TIGR00009">
    <property type="entry name" value="L28"/>
    <property type="match status" value="1"/>
</dbReference>
<dbReference type="PANTHER" id="PTHR13528">
    <property type="entry name" value="39S RIBOSOMAL PROTEIN L28, MITOCHONDRIAL"/>
    <property type="match status" value="1"/>
</dbReference>
<dbReference type="PANTHER" id="PTHR13528:SF2">
    <property type="entry name" value="LARGE RIBOSOMAL SUBUNIT PROTEIN BL28M"/>
    <property type="match status" value="1"/>
</dbReference>
<dbReference type="Pfam" id="PF00830">
    <property type="entry name" value="Ribosomal_L28"/>
    <property type="match status" value="1"/>
</dbReference>
<dbReference type="SUPFAM" id="SSF143800">
    <property type="entry name" value="L28p-like"/>
    <property type="match status" value="1"/>
</dbReference>
<comment type="similarity">
    <text evidence="1">Belongs to the bacterial ribosomal protein bL28 family.</text>
</comment>
<evidence type="ECO:0000255" key="1">
    <source>
        <dbReference type="HAMAP-Rule" id="MF_00373"/>
    </source>
</evidence>
<evidence type="ECO:0000305" key="2"/>
<keyword id="KW-1185">Reference proteome</keyword>
<keyword id="KW-0687">Ribonucleoprotein</keyword>
<keyword id="KW-0689">Ribosomal protein</keyword>
<feature type="chain" id="PRO_0000178539" description="Large ribosomal subunit protein bL28">
    <location>
        <begin position="1"/>
        <end position="97"/>
    </location>
</feature>